<feature type="chain" id="PRO_0000057397" description="tRNA pseudouridine synthase A">
    <location>
        <begin position="1"/>
        <end position="262"/>
    </location>
</feature>
<feature type="active site" description="Nucleophile" evidence="1">
    <location>
        <position position="51"/>
    </location>
</feature>
<feature type="binding site" evidence="1">
    <location>
        <position position="109"/>
    </location>
    <ligand>
        <name>substrate</name>
    </ligand>
</feature>
<evidence type="ECO:0000255" key="1">
    <source>
        <dbReference type="HAMAP-Rule" id="MF_00171"/>
    </source>
</evidence>
<gene>
    <name evidence="1" type="primary">truA</name>
    <name type="ordered locus">lpp1266</name>
</gene>
<proteinExistence type="inferred from homology"/>
<comment type="function">
    <text evidence="1">Formation of pseudouridine at positions 38, 39 and 40 in the anticodon stem and loop of transfer RNAs.</text>
</comment>
<comment type="catalytic activity">
    <reaction evidence="1">
        <text>uridine(38/39/40) in tRNA = pseudouridine(38/39/40) in tRNA</text>
        <dbReference type="Rhea" id="RHEA:22376"/>
        <dbReference type="Rhea" id="RHEA-COMP:10085"/>
        <dbReference type="Rhea" id="RHEA-COMP:10087"/>
        <dbReference type="ChEBI" id="CHEBI:65314"/>
        <dbReference type="ChEBI" id="CHEBI:65315"/>
        <dbReference type="EC" id="5.4.99.12"/>
    </reaction>
</comment>
<comment type="subunit">
    <text evidence="1">Homodimer.</text>
</comment>
<comment type="similarity">
    <text evidence="1">Belongs to the tRNA pseudouridine synthase TruA family.</text>
</comment>
<protein>
    <recommendedName>
        <fullName evidence="1">tRNA pseudouridine synthase A</fullName>
        <ecNumber evidence="1">5.4.99.12</ecNumber>
    </recommendedName>
    <alternativeName>
        <fullName evidence="1">tRNA pseudouridine(38-40) synthase</fullName>
    </alternativeName>
    <alternativeName>
        <fullName evidence="1">tRNA pseudouridylate synthase I</fullName>
    </alternativeName>
    <alternativeName>
        <fullName evidence="1">tRNA-uridine isomerase I</fullName>
    </alternativeName>
</protein>
<name>TRUA_LEGPA</name>
<accession>Q5X5Q4</accession>
<sequence length="262" mass="29559">MRIALVVEYDGSQYHGWQAQTGLHTIQQAVEFALSKVADSSISVVCAGRTDTGVHATNQVIHFDCEKDRSIRAWIHGANTFLPKDICVKWGKEMPENFHARYSAVSRRYRYVIYNGAIRPGLLRGNVTWQYRQLDHRLMQQGGQCLLGENDFTSFRSVECQSNTPMRNIHQLQVTRHGDLVVLDITANAFLHHMVRNIAGVLIAVGSGKHPVGWVKDVLNAKDRKLGAETAPSYGLYLVQVTYPKEFGLLQNNPGPLFLWEK</sequence>
<dbReference type="EC" id="5.4.99.12" evidence="1"/>
<dbReference type="EMBL" id="CR628336">
    <property type="protein sequence ID" value="CAH12417.1"/>
    <property type="molecule type" value="Genomic_DNA"/>
</dbReference>
<dbReference type="RefSeq" id="WP_010947033.1">
    <property type="nucleotide sequence ID" value="NC_006368.1"/>
</dbReference>
<dbReference type="SMR" id="Q5X5Q4"/>
<dbReference type="GeneID" id="57035295"/>
<dbReference type="KEGG" id="lpp:lpp1266"/>
<dbReference type="LegioList" id="lpp1266"/>
<dbReference type="HOGENOM" id="CLU_014673_0_2_6"/>
<dbReference type="GO" id="GO:0003723">
    <property type="term" value="F:RNA binding"/>
    <property type="evidence" value="ECO:0007669"/>
    <property type="project" value="InterPro"/>
</dbReference>
<dbReference type="GO" id="GO:0160147">
    <property type="term" value="F:tRNA pseudouridine(38-40) synthase activity"/>
    <property type="evidence" value="ECO:0007669"/>
    <property type="project" value="UniProtKB-EC"/>
</dbReference>
<dbReference type="GO" id="GO:0031119">
    <property type="term" value="P:tRNA pseudouridine synthesis"/>
    <property type="evidence" value="ECO:0007669"/>
    <property type="project" value="UniProtKB-UniRule"/>
</dbReference>
<dbReference type="CDD" id="cd02570">
    <property type="entry name" value="PseudoU_synth_EcTruA"/>
    <property type="match status" value="1"/>
</dbReference>
<dbReference type="FunFam" id="3.30.70.580:FF:000001">
    <property type="entry name" value="tRNA pseudouridine synthase A"/>
    <property type="match status" value="1"/>
</dbReference>
<dbReference type="Gene3D" id="3.30.70.660">
    <property type="entry name" value="Pseudouridine synthase I, catalytic domain, C-terminal subdomain"/>
    <property type="match status" value="1"/>
</dbReference>
<dbReference type="Gene3D" id="3.30.70.580">
    <property type="entry name" value="Pseudouridine synthase I, catalytic domain, N-terminal subdomain"/>
    <property type="match status" value="1"/>
</dbReference>
<dbReference type="HAMAP" id="MF_00171">
    <property type="entry name" value="TruA"/>
    <property type="match status" value="1"/>
</dbReference>
<dbReference type="InterPro" id="IPR020103">
    <property type="entry name" value="PsdUridine_synth_cat_dom_sf"/>
</dbReference>
<dbReference type="InterPro" id="IPR001406">
    <property type="entry name" value="PsdUridine_synth_TruA"/>
</dbReference>
<dbReference type="InterPro" id="IPR020097">
    <property type="entry name" value="PsdUridine_synth_TruA_a/b_dom"/>
</dbReference>
<dbReference type="InterPro" id="IPR020095">
    <property type="entry name" value="PsdUridine_synth_TruA_C"/>
</dbReference>
<dbReference type="InterPro" id="IPR020094">
    <property type="entry name" value="TruA/RsuA/RluB/E/F_N"/>
</dbReference>
<dbReference type="NCBIfam" id="TIGR00071">
    <property type="entry name" value="hisT_truA"/>
    <property type="match status" value="1"/>
</dbReference>
<dbReference type="PANTHER" id="PTHR11142">
    <property type="entry name" value="PSEUDOURIDYLATE SYNTHASE"/>
    <property type="match status" value="1"/>
</dbReference>
<dbReference type="PANTHER" id="PTHR11142:SF0">
    <property type="entry name" value="TRNA PSEUDOURIDINE SYNTHASE-LIKE 1"/>
    <property type="match status" value="1"/>
</dbReference>
<dbReference type="Pfam" id="PF01416">
    <property type="entry name" value="PseudoU_synth_1"/>
    <property type="match status" value="2"/>
</dbReference>
<dbReference type="PIRSF" id="PIRSF001430">
    <property type="entry name" value="tRNA_psdUrid_synth"/>
    <property type="match status" value="1"/>
</dbReference>
<dbReference type="SUPFAM" id="SSF55120">
    <property type="entry name" value="Pseudouridine synthase"/>
    <property type="match status" value="1"/>
</dbReference>
<reference key="1">
    <citation type="journal article" date="2004" name="Nat. Genet.">
        <title>Evidence in the Legionella pneumophila genome for exploitation of host cell functions and high genome plasticity.</title>
        <authorList>
            <person name="Cazalet C."/>
            <person name="Rusniok C."/>
            <person name="Brueggemann H."/>
            <person name="Zidane N."/>
            <person name="Magnier A."/>
            <person name="Ma L."/>
            <person name="Tichit M."/>
            <person name="Jarraud S."/>
            <person name="Bouchier C."/>
            <person name="Vandenesch F."/>
            <person name="Kunst F."/>
            <person name="Etienne J."/>
            <person name="Glaser P."/>
            <person name="Buchrieser C."/>
        </authorList>
    </citation>
    <scope>NUCLEOTIDE SEQUENCE [LARGE SCALE GENOMIC DNA]</scope>
    <source>
        <strain>Paris</strain>
    </source>
</reference>
<keyword id="KW-0413">Isomerase</keyword>
<keyword id="KW-0819">tRNA processing</keyword>
<organism>
    <name type="scientific">Legionella pneumophila (strain Paris)</name>
    <dbReference type="NCBI Taxonomy" id="297246"/>
    <lineage>
        <taxon>Bacteria</taxon>
        <taxon>Pseudomonadati</taxon>
        <taxon>Pseudomonadota</taxon>
        <taxon>Gammaproteobacteria</taxon>
        <taxon>Legionellales</taxon>
        <taxon>Legionellaceae</taxon>
        <taxon>Legionella</taxon>
    </lineage>
</organism>